<comment type="catalytic activity">
    <reaction>
        <text>ATP + H2O = ADP + phosphate + H(+)</text>
        <dbReference type="Rhea" id="RHEA:13065"/>
        <dbReference type="ChEBI" id="CHEBI:15377"/>
        <dbReference type="ChEBI" id="CHEBI:15378"/>
        <dbReference type="ChEBI" id="CHEBI:30616"/>
        <dbReference type="ChEBI" id="CHEBI:43474"/>
        <dbReference type="ChEBI" id="CHEBI:456216"/>
        <dbReference type="EC" id="3.6.4.13"/>
    </reaction>
</comment>
<comment type="domain">
    <text>The Q motif is unique to and characteristic of the DEAD box family of RNA helicases and controls ATP binding and hydrolysis.</text>
</comment>
<comment type="similarity">
    <text evidence="3">Belongs to the DEAD box helicase family. DDX41 subfamily.</text>
</comment>
<evidence type="ECO:0000255" key="1">
    <source>
        <dbReference type="PROSITE-ProRule" id="PRU00541"/>
    </source>
</evidence>
<evidence type="ECO:0000255" key="2">
    <source>
        <dbReference type="PROSITE-ProRule" id="PRU00542"/>
    </source>
</evidence>
<evidence type="ECO:0000305" key="3"/>
<sequence>MEVDDGYVEYVPVEERLAQMKRKVVEEPGKGMMEHLSDKKKLMSVGELARGITYTEPLSTWWKPPLHVRKMSTKQMDLIRKQWHITVNGEDIPPPIKNFMDMKFPSPLLRMLKDKGIMHPTPIQVQGLPVVLSGRDMIGIAFTGSGKTLVFVLPMIILALQEEIMMPIAAGEGPIALVICPSRELAKQTYDVVEQFVASLVEDGYPRLRSLLCIGGVDMRSQLDVVKKGVHIVVATPGRLKDILAKKKMSLDACRLLTLDEADRLVDLGFEDDIRHVFDHFKSQRQTLLFSATMPAKIQIFATSALVKPVTVNVGRAGAANLDVIQEVEYVKQEAKIVYLLECLQKTTPPVLIFCENKADVDDIHEYLLLKGVEAVAIHGGKDQEDRDYAISLFKAGKKDVLVATDVASKGLDFPDIQHVINYDMPGEIENYVHRIGRTGRCGKTGIATTFINKNQSEITLLDLKHLLQEAKQRIPPVLAELNGPMEETETIANASGVKGCAYCGGLGHRILQCPKFEHQKSVAISSSRKDHFGSDGYRGEV</sequence>
<name>RH43_ARATH</name>
<protein>
    <recommendedName>
        <fullName>Putative DEAD-box ATP-dependent RNA helicase 43</fullName>
        <ecNumber>3.6.4.13</ecNumber>
    </recommendedName>
</protein>
<organism>
    <name type="scientific">Arabidopsis thaliana</name>
    <name type="common">Mouse-ear cress</name>
    <dbReference type="NCBI Taxonomy" id="3702"/>
    <lineage>
        <taxon>Eukaryota</taxon>
        <taxon>Viridiplantae</taxon>
        <taxon>Streptophyta</taxon>
        <taxon>Embryophyta</taxon>
        <taxon>Tracheophyta</taxon>
        <taxon>Spermatophyta</taxon>
        <taxon>Magnoliopsida</taxon>
        <taxon>eudicotyledons</taxon>
        <taxon>Gunneridae</taxon>
        <taxon>Pentapetalae</taxon>
        <taxon>rosids</taxon>
        <taxon>malvids</taxon>
        <taxon>Brassicales</taxon>
        <taxon>Brassicaceae</taxon>
        <taxon>Camelineae</taxon>
        <taxon>Arabidopsis</taxon>
    </lineage>
</organism>
<reference key="1">
    <citation type="journal article" date="1999" name="Nature">
        <title>Sequence and analysis of chromosome 4 of the plant Arabidopsis thaliana.</title>
        <authorList>
            <person name="Mayer K.F.X."/>
            <person name="Schueller C."/>
            <person name="Wambutt R."/>
            <person name="Murphy G."/>
            <person name="Volckaert G."/>
            <person name="Pohl T."/>
            <person name="Duesterhoeft A."/>
            <person name="Stiekema W."/>
            <person name="Entian K.-D."/>
            <person name="Terryn N."/>
            <person name="Harris B."/>
            <person name="Ansorge W."/>
            <person name="Brandt P."/>
            <person name="Grivell L.A."/>
            <person name="Rieger M."/>
            <person name="Weichselgartner M."/>
            <person name="de Simone V."/>
            <person name="Obermaier B."/>
            <person name="Mache R."/>
            <person name="Mueller M."/>
            <person name="Kreis M."/>
            <person name="Delseny M."/>
            <person name="Puigdomenech P."/>
            <person name="Watson M."/>
            <person name="Schmidtheini T."/>
            <person name="Reichert B."/>
            <person name="Portetelle D."/>
            <person name="Perez-Alonso M."/>
            <person name="Boutry M."/>
            <person name="Bancroft I."/>
            <person name="Vos P."/>
            <person name="Hoheisel J."/>
            <person name="Zimmermann W."/>
            <person name="Wedler H."/>
            <person name="Ridley P."/>
            <person name="Langham S.-A."/>
            <person name="McCullagh B."/>
            <person name="Bilham L."/>
            <person name="Robben J."/>
            <person name="van der Schueren J."/>
            <person name="Grymonprez B."/>
            <person name="Chuang Y.-J."/>
            <person name="Vandenbussche F."/>
            <person name="Braeken M."/>
            <person name="Weltjens I."/>
            <person name="Voet M."/>
            <person name="Bastiaens I."/>
            <person name="Aert R."/>
            <person name="Defoor E."/>
            <person name="Weitzenegger T."/>
            <person name="Bothe G."/>
            <person name="Ramsperger U."/>
            <person name="Hilbert H."/>
            <person name="Braun M."/>
            <person name="Holzer E."/>
            <person name="Brandt A."/>
            <person name="Peters S."/>
            <person name="van Staveren M."/>
            <person name="Dirkse W."/>
            <person name="Mooijman P."/>
            <person name="Klein Lankhorst R."/>
            <person name="Rose M."/>
            <person name="Hauf J."/>
            <person name="Koetter P."/>
            <person name="Berneiser S."/>
            <person name="Hempel S."/>
            <person name="Feldpausch M."/>
            <person name="Lamberth S."/>
            <person name="Van den Daele H."/>
            <person name="De Keyser A."/>
            <person name="Buysshaert C."/>
            <person name="Gielen J."/>
            <person name="Villarroel R."/>
            <person name="De Clercq R."/>
            <person name="van Montagu M."/>
            <person name="Rogers J."/>
            <person name="Cronin A."/>
            <person name="Quail M.A."/>
            <person name="Bray-Allen S."/>
            <person name="Clark L."/>
            <person name="Doggett J."/>
            <person name="Hall S."/>
            <person name="Kay M."/>
            <person name="Lennard N."/>
            <person name="McLay K."/>
            <person name="Mayes R."/>
            <person name="Pettett A."/>
            <person name="Rajandream M.A."/>
            <person name="Lyne M."/>
            <person name="Benes V."/>
            <person name="Rechmann S."/>
            <person name="Borkova D."/>
            <person name="Bloecker H."/>
            <person name="Scharfe M."/>
            <person name="Grimm M."/>
            <person name="Loehnert T.-H."/>
            <person name="Dose S."/>
            <person name="de Haan M."/>
            <person name="Maarse A.C."/>
            <person name="Schaefer M."/>
            <person name="Mueller-Auer S."/>
            <person name="Gabel C."/>
            <person name="Fuchs M."/>
            <person name="Fartmann B."/>
            <person name="Granderath K."/>
            <person name="Dauner D."/>
            <person name="Herzl A."/>
            <person name="Neumann S."/>
            <person name="Argiriou A."/>
            <person name="Vitale D."/>
            <person name="Liguori R."/>
            <person name="Piravandi E."/>
            <person name="Massenet O."/>
            <person name="Quigley F."/>
            <person name="Clabauld G."/>
            <person name="Muendlein A."/>
            <person name="Felber R."/>
            <person name="Schnabl S."/>
            <person name="Hiller R."/>
            <person name="Schmidt W."/>
            <person name="Lecharny A."/>
            <person name="Aubourg S."/>
            <person name="Chefdor F."/>
            <person name="Cooke R."/>
            <person name="Berger C."/>
            <person name="Monfort A."/>
            <person name="Casacuberta E."/>
            <person name="Gibbons T."/>
            <person name="Weber N."/>
            <person name="Vandenbol M."/>
            <person name="Bargues M."/>
            <person name="Terol J."/>
            <person name="Torres A."/>
            <person name="Perez-Perez A."/>
            <person name="Purnelle B."/>
            <person name="Bent E."/>
            <person name="Johnson S."/>
            <person name="Tacon D."/>
            <person name="Jesse T."/>
            <person name="Heijnen L."/>
            <person name="Schwarz S."/>
            <person name="Scholler P."/>
            <person name="Heber S."/>
            <person name="Francs P."/>
            <person name="Bielke C."/>
            <person name="Frishman D."/>
            <person name="Haase D."/>
            <person name="Lemcke K."/>
            <person name="Mewes H.-W."/>
            <person name="Stocker S."/>
            <person name="Zaccaria P."/>
            <person name="Bevan M."/>
            <person name="Wilson R.K."/>
            <person name="de la Bastide M."/>
            <person name="Habermann K."/>
            <person name="Parnell L."/>
            <person name="Dedhia N."/>
            <person name="Gnoj L."/>
            <person name="Schutz K."/>
            <person name="Huang E."/>
            <person name="Spiegel L."/>
            <person name="Sekhon M."/>
            <person name="Murray J."/>
            <person name="Sheet P."/>
            <person name="Cordes M."/>
            <person name="Abu-Threideh J."/>
            <person name="Stoneking T."/>
            <person name="Kalicki J."/>
            <person name="Graves T."/>
            <person name="Harmon G."/>
            <person name="Edwards J."/>
            <person name="Latreille P."/>
            <person name="Courtney L."/>
            <person name="Cloud J."/>
            <person name="Abbott A."/>
            <person name="Scott K."/>
            <person name="Johnson D."/>
            <person name="Minx P."/>
            <person name="Bentley D."/>
            <person name="Fulton B."/>
            <person name="Miller N."/>
            <person name="Greco T."/>
            <person name="Kemp K."/>
            <person name="Kramer J."/>
            <person name="Fulton L."/>
            <person name="Mardis E."/>
            <person name="Dante M."/>
            <person name="Pepin K."/>
            <person name="Hillier L.W."/>
            <person name="Nelson J."/>
            <person name="Spieth J."/>
            <person name="Ryan E."/>
            <person name="Andrews S."/>
            <person name="Geisel C."/>
            <person name="Layman D."/>
            <person name="Du H."/>
            <person name="Ali J."/>
            <person name="Berghoff A."/>
            <person name="Jones K."/>
            <person name="Drone K."/>
            <person name="Cotton M."/>
            <person name="Joshu C."/>
            <person name="Antonoiu B."/>
            <person name="Zidanic M."/>
            <person name="Strong C."/>
            <person name="Sun H."/>
            <person name="Lamar B."/>
            <person name="Yordan C."/>
            <person name="Ma P."/>
            <person name="Zhong J."/>
            <person name="Preston R."/>
            <person name="Vil D."/>
            <person name="Shekher M."/>
            <person name="Matero A."/>
            <person name="Shah R."/>
            <person name="Swaby I.K."/>
            <person name="O'Shaughnessy A."/>
            <person name="Rodriguez M."/>
            <person name="Hoffman J."/>
            <person name="Till S."/>
            <person name="Granat S."/>
            <person name="Shohdy N."/>
            <person name="Hasegawa A."/>
            <person name="Hameed A."/>
            <person name="Lodhi M."/>
            <person name="Johnson A."/>
            <person name="Chen E."/>
            <person name="Marra M.A."/>
            <person name="Martienssen R."/>
            <person name="McCombie W.R."/>
        </authorList>
    </citation>
    <scope>NUCLEOTIDE SEQUENCE [LARGE SCALE GENOMIC DNA]</scope>
    <source>
        <strain>cv. Columbia</strain>
    </source>
</reference>
<reference key="2">
    <citation type="journal article" date="2017" name="Plant J.">
        <title>Araport11: a complete reannotation of the Arabidopsis thaliana reference genome.</title>
        <authorList>
            <person name="Cheng C.Y."/>
            <person name="Krishnakumar V."/>
            <person name="Chan A.P."/>
            <person name="Thibaud-Nissen F."/>
            <person name="Schobel S."/>
            <person name="Town C.D."/>
        </authorList>
    </citation>
    <scope>GENOME REANNOTATION</scope>
    <source>
        <strain>cv. Columbia</strain>
    </source>
</reference>
<reference key="3">
    <citation type="journal article" date="2004" name="Plant Biotechnol. J.">
        <title>DEAD-box RNA helicases in Arabidopsis thaliana: establishing a link between quantitative expression, gene structure and evolution of a family of genes.</title>
        <authorList>
            <person name="Mingam A."/>
            <person name="Toffano-Nioche C."/>
            <person name="Brunaud V."/>
            <person name="Boudet N."/>
            <person name="Kreis M."/>
            <person name="Lecharny A."/>
        </authorList>
    </citation>
    <scope>GENE FAMILY</scope>
    <scope>NOMENCLATURE</scope>
</reference>
<reference key="4">
    <citation type="journal article" date="2013" name="PLoS ONE">
        <title>Genome-wide comparative in silico analysis of the RNA helicase gene family in Zea mays and Glycine max: a comparison with Arabidopsis and Oryza sativa.</title>
        <authorList>
            <person name="Xu R."/>
            <person name="Zhang S."/>
            <person name="Huang J."/>
            <person name="Zheng C."/>
        </authorList>
    </citation>
    <scope>GENE FAMILY</scope>
</reference>
<gene>
    <name type="primary">RH43</name>
    <name type="ordered locus">At4g33370</name>
    <name type="ORF">F17M5.130</name>
</gene>
<proteinExistence type="inferred from homology"/>
<keyword id="KW-0067">ATP-binding</keyword>
<keyword id="KW-0347">Helicase</keyword>
<keyword id="KW-0378">Hydrolase</keyword>
<keyword id="KW-0479">Metal-binding</keyword>
<keyword id="KW-0547">Nucleotide-binding</keyword>
<keyword id="KW-1185">Reference proteome</keyword>
<keyword id="KW-0694">RNA-binding</keyword>
<keyword id="KW-0862">Zinc</keyword>
<keyword id="KW-0863">Zinc-finger</keyword>
<dbReference type="EC" id="3.6.4.13"/>
<dbReference type="EMBL" id="AL035678">
    <property type="protein sequence ID" value="CAB38795.1"/>
    <property type="molecule type" value="Genomic_DNA"/>
</dbReference>
<dbReference type="EMBL" id="AL161583">
    <property type="protein sequence ID" value="CAB80054.1"/>
    <property type="molecule type" value="Genomic_DNA"/>
</dbReference>
<dbReference type="EMBL" id="CP002687">
    <property type="protein sequence ID" value="AEE86216.1"/>
    <property type="molecule type" value="Genomic_DNA"/>
</dbReference>
<dbReference type="PIR" id="T05988">
    <property type="entry name" value="T05988"/>
</dbReference>
<dbReference type="RefSeq" id="NP_195063.1">
    <property type="nucleotide sequence ID" value="NM_119491.1"/>
</dbReference>
<dbReference type="SMR" id="Q9SZB4"/>
<dbReference type="BioGRID" id="14758">
    <property type="interactions" value="3"/>
</dbReference>
<dbReference type="FunCoup" id="Q9SZB4">
    <property type="interactions" value="3987"/>
</dbReference>
<dbReference type="STRING" id="3702.Q9SZB4"/>
<dbReference type="PaxDb" id="3702-AT4G33370.1"/>
<dbReference type="ProteomicsDB" id="236911"/>
<dbReference type="EnsemblPlants" id="AT4G33370.1">
    <property type="protein sequence ID" value="AT4G33370.1"/>
    <property type="gene ID" value="AT4G33370"/>
</dbReference>
<dbReference type="GeneID" id="829474"/>
<dbReference type="Gramene" id="AT4G33370.1">
    <property type="protein sequence ID" value="AT4G33370.1"/>
    <property type="gene ID" value="AT4G33370"/>
</dbReference>
<dbReference type="KEGG" id="ath:AT4G33370"/>
<dbReference type="Araport" id="AT4G33370"/>
<dbReference type="TAIR" id="AT4G33370"/>
<dbReference type="eggNOG" id="KOG0341">
    <property type="taxonomic scope" value="Eukaryota"/>
</dbReference>
<dbReference type="HOGENOM" id="CLU_003041_16_5_1"/>
<dbReference type="InParanoid" id="Q9SZB4"/>
<dbReference type="PhylomeDB" id="Q9SZB4"/>
<dbReference type="PRO" id="PR:Q9SZB4"/>
<dbReference type="Proteomes" id="UP000006548">
    <property type="component" value="Chromosome 4"/>
</dbReference>
<dbReference type="ExpressionAtlas" id="Q9SZB4">
    <property type="expression patterns" value="baseline and differential"/>
</dbReference>
<dbReference type="GO" id="GO:0005524">
    <property type="term" value="F:ATP binding"/>
    <property type="evidence" value="ECO:0007669"/>
    <property type="project" value="UniProtKB-KW"/>
</dbReference>
<dbReference type="GO" id="GO:0016887">
    <property type="term" value="F:ATP hydrolysis activity"/>
    <property type="evidence" value="ECO:0007669"/>
    <property type="project" value="RHEA"/>
</dbReference>
<dbReference type="GO" id="GO:0003723">
    <property type="term" value="F:RNA binding"/>
    <property type="evidence" value="ECO:0007669"/>
    <property type="project" value="UniProtKB-KW"/>
</dbReference>
<dbReference type="GO" id="GO:0003724">
    <property type="term" value="F:RNA helicase activity"/>
    <property type="evidence" value="ECO:0007669"/>
    <property type="project" value="UniProtKB-EC"/>
</dbReference>
<dbReference type="GO" id="GO:0008270">
    <property type="term" value="F:zinc ion binding"/>
    <property type="evidence" value="ECO:0007669"/>
    <property type="project" value="UniProtKB-KW"/>
</dbReference>
<dbReference type="GO" id="GO:0000398">
    <property type="term" value="P:mRNA splicing, via spliceosome"/>
    <property type="evidence" value="ECO:0007669"/>
    <property type="project" value="InterPro"/>
</dbReference>
<dbReference type="CDD" id="cd17951">
    <property type="entry name" value="DEADc_DDX41"/>
    <property type="match status" value="1"/>
</dbReference>
<dbReference type="CDD" id="cd18787">
    <property type="entry name" value="SF2_C_DEAD"/>
    <property type="match status" value="1"/>
</dbReference>
<dbReference type="FunFam" id="3.40.50.300:FF:000449">
    <property type="entry name" value="Probable ATP-dependent RNA helicase DDX41"/>
    <property type="match status" value="1"/>
</dbReference>
<dbReference type="FunFam" id="3.40.50.300:FF:000657">
    <property type="entry name" value="Probable ATP-dependent RNA helicase DDX41"/>
    <property type="match status" value="1"/>
</dbReference>
<dbReference type="Gene3D" id="3.40.50.300">
    <property type="entry name" value="P-loop containing nucleotide triphosphate hydrolases"/>
    <property type="match status" value="2"/>
</dbReference>
<dbReference type="InterPro" id="IPR011545">
    <property type="entry name" value="DEAD/DEAH_box_helicase_dom"/>
</dbReference>
<dbReference type="InterPro" id="IPR044113">
    <property type="entry name" value="DEADc_DDX41"/>
</dbReference>
<dbReference type="InterPro" id="IPR014001">
    <property type="entry name" value="Helicase_ATP-bd"/>
</dbReference>
<dbReference type="InterPro" id="IPR001650">
    <property type="entry name" value="Helicase_C-like"/>
</dbReference>
<dbReference type="InterPro" id="IPR027417">
    <property type="entry name" value="P-loop_NTPase"/>
</dbReference>
<dbReference type="InterPro" id="IPR014014">
    <property type="entry name" value="RNA_helicase_DEAD_Q_motif"/>
</dbReference>
<dbReference type="PANTHER" id="PTHR47958">
    <property type="entry name" value="ATP-DEPENDENT RNA HELICASE DBP3"/>
    <property type="match status" value="1"/>
</dbReference>
<dbReference type="Pfam" id="PF00270">
    <property type="entry name" value="DEAD"/>
    <property type="match status" value="1"/>
</dbReference>
<dbReference type="Pfam" id="PF00271">
    <property type="entry name" value="Helicase_C"/>
    <property type="match status" value="1"/>
</dbReference>
<dbReference type="SMART" id="SM00487">
    <property type="entry name" value="DEXDc"/>
    <property type="match status" value="1"/>
</dbReference>
<dbReference type="SMART" id="SM00490">
    <property type="entry name" value="HELICc"/>
    <property type="match status" value="1"/>
</dbReference>
<dbReference type="SUPFAM" id="SSF52540">
    <property type="entry name" value="P-loop containing nucleoside triphosphate hydrolases"/>
    <property type="match status" value="1"/>
</dbReference>
<dbReference type="PROSITE" id="PS51192">
    <property type="entry name" value="HELICASE_ATP_BIND_1"/>
    <property type="match status" value="1"/>
</dbReference>
<dbReference type="PROSITE" id="PS51194">
    <property type="entry name" value="HELICASE_CTER"/>
    <property type="match status" value="1"/>
</dbReference>
<dbReference type="PROSITE" id="PS51195">
    <property type="entry name" value="Q_MOTIF"/>
    <property type="match status" value="1"/>
</dbReference>
<feature type="chain" id="PRO_0000239183" description="Putative DEAD-box ATP-dependent RNA helicase 43">
    <location>
        <begin position="1"/>
        <end position="542"/>
    </location>
</feature>
<feature type="domain" description="Helicase ATP-binding" evidence="1">
    <location>
        <begin position="128"/>
        <end position="312"/>
    </location>
</feature>
<feature type="domain" description="Helicase C-terminal" evidence="2">
    <location>
        <begin position="323"/>
        <end position="483"/>
    </location>
</feature>
<feature type="zinc finger region" description="CCHC-type">
    <location>
        <begin position="499"/>
        <end position="516"/>
    </location>
</feature>
<feature type="short sequence motif" description="Q motif">
    <location>
        <begin position="97"/>
        <end position="125"/>
    </location>
</feature>
<feature type="short sequence motif" description="DEAD box">
    <location>
        <begin position="260"/>
        <end position="263"/>
    </location>
</feature>
<feature type="binding site" evidence="1">
    <location>
        <begin position="141"/>
        <end position="148"/>
    </location>
    <ligand>
        <name>ATP</name>
        <dbReference type="ChEBI" id="CHEBI:30616"/>
    </ligand>
</feature>
<accession>Q9SZB4</accession>